<proteinExistence type="inferred from homology"/>
<reference key="1">
    <citation type="journal article" date="2007" name="J. Bacteriol.">
        <title>The complete genome sequence of the lactic acid bacterial paradigm Lactococcus lactis subsp. cremoris MG1363.</title>
        <authorList>
            <person name="Wegmann U."/>
            <person name="O'Connell-Motherway M."/>
            <person name="Zomer A."/>
            <person name="Buist G."/>
            <person name="Shearman C."/>
            <person name="Canchaya C."/>
            <person name="Ventura M."/>
            <person name="Goesmann A."/>
            <person name="Gasson M.J."/>
            <person name="Kuipers O.P."/>
            <person name="van Sinderen D."/>
            <person name="Kok J."/>
        </authorList>
    </citation>
    <scope>NUCLEOTIDE SEQUENCE [LARGE SCALE GENOMIC DNA]</scope>
    <source>
        <strain>MG1363</strain>
    </source>
</reference>
<feature type="chain" id="PRO_1000015230" description="S-adenosylmethionine:tRNA ribosyltransferase-isomerase">
    <location>
        <begin position="1"/>
        <end position="346"/>
    </location>
</feature>
<dbReference type="EC" id="2.4.99.17" evidence="1"/>
<dbReference type="EMBL" id="AM406671">
    <property type="protein sequence ID" value="CAL97520.1"/>
    <property type="molecule type" value="Genomic_DNA"/>
</dbReference>
<dbReference type="RefSeq" id="WP_011834873.1">
    <property type="nucleotide sequence ID" value="NC_009004.1"/>
</dbReference>
<dbReference type="SMR" id="A2RJR5"/>
<dbReference type="STRING" id="416870.llmg_0926"/>
<dbReference type="KEGG" id="llm:llmg_0926"/>
<dbReference type="eggNOG" id="COG0809">
    <property type="taxonomic scope" value="Bacteria"/>
</dbReference>
<dbReference type="HOGENOM" id="CLU_039110_1_0_9"/>
<dbReference type="OrthoDB" id="9805933at2"/>
<dbReference type="PhylomeDB" id="A2RJR5"/>
<dbReference type="UniPathway" id="UPA00392"/>
<dbReference type="Proteomes" id="UP000000364">
    <property type="component" value="Chromosome"/>
</dbReference>
<dbReference type="GO" id="GO:0005737">
    <property type="term" value="C:cytoplasm"/>
    <property type="evidence" value="ECO:0007669"/>
    <property type="project" value="UniProtKB-SubCell"/>
</dbReference>
<dbReference type="GO" id="GO:0051075">
    <property type="term" value="F:S-adenosylmethionine:tRNA ribosyltransferase-isomerase activity"/>
    <property type="evidence" value="ECO:0007669"/>
    <property type="project" value="UniProtKB-EC"/>
</dbReference>
<dbReference type="GO" id="GO:0008616">
    <property type="term" value="P:queuosine biosynthetic process"/>
    <property type="evidence" value="ECO:0007669"/>
    <property type="project" value="UniProtKB-UniRule"/>
</dbReference>
<dbReference type="GO" id="GO:0002099">
    <property type="term" value="P:tRNA wobble guanine modification"/>
    <property type="evidence" value="ECO:0007669"/>
    <property type="project" value="TreeGrafter"/>
</dbReference>
<dbReference type="FunFam" id="2.40.10.240:FF:000002">
    <property type="entry name" value="S-adenosylmethionine:tRNA ribosyltransferase-isomerase"/>
    <property type="match status" value="1"/>
</dbReference>
<dbReference type="FunFam" id="3.40.1780.10:FF:000001">
    <property type="entry name" value="S-adenosylmethionine:tRNA ribosyltransferase-isomerase"/>
    <property type="match status" value="1"/>
</dbReference>
<dbReference type="Gene3D" id="2.40.10.240">
    <property type="entry name" value="QueA-like"/>
    <property type="match status" value="1"/>
</dbReference>
<dbReference type="Gene3D" id="3.40.1780.10">
    <property type="entry name" value="QueA-like"/>
    <property type="match status" value="1"/>
</dbReference>
<dbReference type="HAMAP" id="MF_00113">
    <property type="entry name" value="QueA"/>
    <property type="match status" value="1"/>
</dbReference>
<dbReference type="InterPro" id="IPR003699">
    <property type="entry name" value="QueA"/>
</dbReference>
<dbReference type="InterPro" id="IPR042118">
    <property type="entry name" value="QueA_dom1"/>
</dbReference>
<dbReference type="InterPro" id="IPR042119">
    <property type="entry name" value="QueA_dom2"/>
</dbReference>
<dbReference type="InterPro" id="IPR036100">
    <property type="entry name" value="QueA_sf"/>
</dbReference>
<dbReference type="NCBIfam" id="NF001140">
    <property type="entry name" value="PRK00147.1"/>
    <property type="match status" value="1"/>
</dbReference>
<dbReference type="NCBIfam" id="TIGR00113">
    <property type="entry name" value="queA"/>
    <property type="match status" value="1"/>
</dbReference>
<dbReference type="PANTHER" id="PTHR30307">
    <property type="entry name" value="S-ADENOSYLMETHIONINE:TRNA RIBOSYLTRANSFERASE-ISOMERASE"/>
    <property type="match status" value="1"/>
</dbReference>
<dbReference type="PANTHER" id="PTHR30307:SF0">
    <property type="entry name" value="S-ADENOSYLMETHIONINE:TRNA RIBOSYLTRANSFERASE-ISOMERASE"/>
    <property type="match status" value="1"/>
</dbReference>
<dbReference type="Pfam" id="PF02547">
    <property type="entry name" value="Queuosine_synth"/>
    <property type="match status" value="1"/>
</dbReference>
<dbReference type="SUPFAM" id="SSF111337">
    <property type="entry name" value="QueA-like"/>
    <property type="match status" value="1"/>
</dbReference>
<name>QUEA_LACLM</name>
<sequence>MNINDFDFDLPEELIAQTPLEKRSESRLLILDPKTEELEDRHFYDIIDELEAGDALVLNNTRVLPARLHGERAETGGHIELLLLKDMGENRWETLAKPARKMKVGEEVVFGDGRLKAVVVEILEHGGRIVEFKYDGIFLEILESLGEMPLPPYIHEQLEDQERYQTVFAKENGSAAAPTAGLHYTPELLEKIADKGVKIVELTLHVGLGTFRPVSVDNVDEHHMHSEFYRLTEEAAAQLRAVKASGHKIFASGTTSIRTLETIGSKFDGDIQADSGWTDIFIKPGYEWKVVDAFNTNFHLPKSTLVMLVAAFAGRDFVLEAYQHAIDEKYRFFSFGDAMFVRSKNK</sequence>
<protein>
    <recommendedName>
        <fullName evidence="1">S-adenosylmethionine:tRNA ribosyltransferase-isomerase</fullName>
        <ecNumber evidence="1">2.4.99.17</ecNumber>
    </recommendedName>
    <alternativeName>
        <fullName evidence="1">Queuosine biosynthesis protein QueA</fullName>
    </alternativeName>
</protein>
<keyword id="KW-0963">Cytoplasm</keyword>
<keyword id="KW-0671">Queuosine biosynthesis</keyword>
<keyword id="KW-0949">S-adenosyl-L-methionine</keyword>
<keyword id="KW-0808">Transferase</keyword>
<accession>A2RJR5</accession>
<evidence type="ECO:0000255" key="1">
    <source>
        <dbReference type="HAMAP-Rule" id="MF_00113"/>
    </source>
</evidence>
<comment type="function">
    <text evidence="1">Transfers and isomerizes the ribose moiety from AdoMet to the 7-aminomethyl group of 7-deazaguanine (preQ1-tRNA) to give epoxyqueuosine (oQ-tRNA).</text>
</comment>
<comment type="catalytic activity">
    <reaction evidence="1">
        <text>7-aminomethyl-7-carbaguanosine(34) in tRNA + S-adenosyl-L-methionine = epoxyqueuosine(34) in tRNA + adenine + L-methionine + 2 H(+)</text>
        <dbReference type="Rhea" id="RHEA:32155"/>
        <dbReference type="Rhea" id="RHEA-COMP:10342"/>
        <dbReference type="Rhea" id="RHEA-COMP:18582"/>
        <dbReference type="ChEBI" id="CHEBI:15378"/>
        <dbReference type="ChEBI" id="CHEBI:16708"/>
        <dbReference type="ChEBI" id="CHEBI:57844"/>
        <dbReference type="ChEBI" id="CHEBI:59789"/>
        <dbReference type="ChEBI" id="CHEBI:82833"/>
        <dbReference type="ChEBI" id="CHEBI:194443"/>
        <dbReference type="EC" id="2.4.99.17"/>
    </reaction>
</comment>
<comment type="pathway">
    <text evidence="1">tRNA modification; tRNA-queuosine biosynthesis.</text>
</comment>
<comment type="subunit">
    <text evidence="1">Monomer.</text>
</comment>
<comment type="subcellular location">
    <subcellularLocation>
        <location evidence="1">Cytoplasm</location>
    </subcellularLocation>
</comment>
<comment type="similarity">
    <text evidence="1">Belongs to the QueA family.</text>
</comment>
<organism>
    <name type="scientific">Lactococcus lactis subsp. cremoris (strain MG1363)</name>
    <dbReference type="NCBI Taxonomy" id="416870"/>
    <lineage>
        <taxon>Bacteria</taxon>
        <taxon>Bacillati</taxon>
        <taxon>Bacillota</taxon>
        <taxon>Bacilli</taxon>
        <taxon>Lactobacillales</taxon>
        <taxon>Streptococcaceae</taxon>
        <taxon>Lactococcus</taxon>
        <taxon>Lactococcus cremoris subsp. cremoris</taxon>
    </lineage>
</organism>
<gene>
    <name evidence="1" type="primary">queA</name>
    <name type="ordered locus">llmg_0926</name>
</gene>